<keyword id="KW-1003">Cell membrane</keyword>
<keyword id="KW-0967">Endosome</keyword>
<keyword id="KW-0325">Glycoprotein</keyword>
<keyword id="KW-0406">Ion transport</keyword>
<keyword id="KW-0458">Lysosome</keyword>
<keyword id="KW-0472">Membrane</keyword>
<keyword id="KW-1185">Reference proteome</keyword>
<keyword id="KW-0732">Signal</keyword>
<keyword id="KW-0812">Transmembrane</keyword>
<keyword id="KW-1133">Transmembrane helix</keyword>
<keyword id="KW-0813">Transport</keyword>
<keyword id="KW-0862">Zinc</keyword>
<keyword id="KW-0864">Zinc transport</keyword>
<name>S39AE_XENTR</name>
<reference key="1">
    <citation type="submission" date="2007-03" db="EMBL/GenBank/DDBJ databases">
        <authorList>
            <consortium name="NIH - Xenopus Gene Collection (XGC) project"/>
        </authorList>
    </citation>
    <scope>NUCLEOTIDE SEQUENCE [LARGE SCALE MRNA]</scope>
    <source>
        <tissue>Embryo</tissue>
    </source>
</reference>
<dbReference type="EMBL" id="BC135298">
    <property type="protein sequence ID" value="AAI35299.1"/>
    <property type="molecule type" value="mRNA"/>
</dbReference>
<dbReference type="RefSeq" id="NP_001090864.1">
    <property type="nucleotide sequence ID" value="NM_001097395.1"/>
</dbReference>
<dbReference type="SMR" id="A4IGY6"/>
<dbReference type="FunCoup" id="A4IGY6">
    <property type="interactions" value="603"/>
</dbReference>
<dbReference type="STRING" id="8364.ENSXETP00000017137"/>
<dbReference type="GlyCosmos" id="A4IGY6">
    <property type="glycosylation" value="4 sites, No reported glycans"/>
</dbReference>
<dbReference type="PaxDb" id="8364-ENSXETP00000054787"/>
<dbReference type="GeneID" id="100038282"/>
<dbReference type="KEGG" id="xtr:100038282"/>
<dbReference type="AGR" id="Xenbase:XB-GENE-982219"/>
<dbReference type="CTD" id="23516"/>
<dbReference type="Xenbase" id="XB-GENE-982219">
    <property type="gene designation" value="slc39a14"/>
</dbReference>
<dbReference type="eggNOG" id="KOG2693">
    <property type="taxonomic scope" value="Eukaryota"/>
</dbReference>
<dbReference type="HOGENOM" id="CLU_015114_13_0_1"/>
<dbReference type="InParanoid" id="A4IGY6"/>
<dbReference type="OrthoDB" id="200954at2759"/>
<dbReference type="Reactome" id="R-XTR-442380">
    <property type="pathway name" value="Zinc influx into cells by the SLC39 gene family"/>
</dbReference>
<dbReference type="Proteomes" id="UP000008143">
    <property type="component" value="Chromosome 3"/>
</dbReference>
<dbReference type="GO" id="GO:0016324">
    <property type="term" value="C:apical plasma membrane"/>
    <property type="evidence" value="ECO:0000250"/>
    <property type="project" value="UniProtKB"/>
</dbReference>
<dbReference type="GO" id="GO:0016323">
    <property type="term" value="C:basolateral plasma membrane"/>
    <property type="evidence" value="ECO:0000250"/>
    <property type="project" value="UniProtKB"/>
</dbReference>
<dbReference type="GO" id="GO:0031901">
    <property type="term" value="C:early endosome membrane"/>
    <property type="evidence" value="ECO:0000250"/>
    <property type="project" value="UniProtKB"/>
</dbReference>
<dbReference type="GO" id="GO:0031902">
    <property type="term" value="C:late endosome membrane"/>
    <property type="evidence" value="ECO:0000250"/>
    <property type="project" value="UniProtKB"/>
</dbReference>
<dbReference type="GO" id="GO:0005765">
    <property type="term" value="C:lysosomal membrane"/>
    <property type="evidence" value="ECO:0000250"/>
    <property type="project" value="UniProtKB"/>
</dbReference>
<dbReference type="GO" id="GO:0005886">
    <property type="term" value="C:plasma membrane"/>
    <property type="evidence" value="ECO:0000250"/>
    <property type="project" value="UniProtKB"/>
</dbReference>
<dbReference type="GO" id="GO:0015086">
    <property type="term" value="F:cadmium ion transmembrane transporter activity"/>
    <property type="evidence" value="ECO:0000250"/>
    <property type="project" value="UniProtKB"/>
</dbReference>
<dbReference type="GO" id="GO:0005381">
    <property type="term" value="F:iron ion transmembrane transporter activity"/>
    <property type="evidence" value="ECO:0000250"/>
    <property type="project" value="UniProtKB"/>
</dbReference>
<dbReference type="GO" id="GO:0005384">
    <property type="term" value="F:manganese ion transmembrane transporter activity"/>
    <property type="evidence" value="ECO:0000250"/>
    <property type="project" value="UniProtKB"/>
</dbReference>
<dbReference type="GO" id="GO:0015296">
    <property type="term" value="F:monoatomic anion:monoatomic cation symporter activity"/>
    <property type="evidence" value="ECO:0000250"/>
    <property type="project" value="UniProtKB"/>
</dbReference>
<dbReference type="GO" id="GO:0005385">
    <property type="term" value="F:zinc ion transmembrane transporter activity"/>
    <property type="evidence" value="ECO:0000250"/>
    <property type="project" value="UniProtKB"/>
</dbReference>
<dbReference type="GO" id="GO:0071333">
    <property type="term" value="P:cellular response to glucose stimulus"/>
    <property type="evidence" value="ECO:0000250"/>
    <property type="project" value="UniProtKB"/>
</dbReference>
<dbReference type="GO" id="GO:0032869">
    <property type="term" value="P:cellular response to insulin stimulus"/>
    <property type="evidence" value="ECO:0000250"/>
    <property type="project" value="UniProtKB"/>
</dbReference>
<dbReference type="GO" id="GO:0098739">
    <property type="term" value="P:import across plasma membrane"/>
    <property type="evidence" value="ECO:0000250"/>
    <property type="project" value="UniProtKB"/>
</dbReference>
<dbReference type="GO" id="GO:0098662">
    <property type="term" value="P:inorganic cation transmembrane transport"/>
    <property type="evidence" value="ECO:0000250"/>
    <property type="project" value="UniProtKB"/>
</dbReference>
<dbReference type="GO" id="GO:0006882">
    <property type="term" value="P:intracellular zinc ion homeostasis"/>
    <property type="evidence" value="ECO:0000250"/>
    <property type="project" value="UniProtKB"/>
</dbReference>
<dbReference type="GO" id="GO:0033212">
    <property type="term" value="P:iron import into cell"/>
    <property type="evidence" value="ECO:0000250"/>
    <property type="project" value="UniProtKB"/>
</dbReference>
<dbReference type="GO" id="GO:0034755">
    <property type="term" value="P:iron ion transmembrane transport"/>
    <property type="evidence" value="ECO:0000250"/>
    <property type="project" value="UniProtKB"/>
</dbReference>
<dbReference type="GO" id="GO:0055071">
    <property type="term" value="P:manganese ion homeostasis"/>
    <property type="evidence" value="ECO:0000250"/>
    <property type="project" value="UniProtKB"/>
</dbReference>
<dbReference type="GO" id="GO:0071421">
    <property type="term" value="P:manganese ion transmembrane transport"/>
    <property type="evidence" value="ECO:0000250"/>
    <property type="project" value="UniProtKB"/>
</dbReference>
<dbReference type="GO" id="GO:0045745">
    <property type="term" value="P:positive regulation of G protein-coupled receptor signaling pathway"/>
    <property type="evidence" value="ECO:0000250"/>
    <property type="project" value="UniProtKB"/>
</dbReference>
<dbReference type="GO" id="GO:0071578">
    <property type="term" value="P:zinc ion import across plasma membrane"/>
    <property type="evidence" value="ECO:0000250"/>
    <property type="project" value="UniProtKB"/>
</dbReference>
<dbReference type="GO" id="GO:0071577">
    <property type="term" value="P:zinc ion transmembrane transport"/>
    <property type="evidence" value="ECO:0000250"/>
    <property type="project" value="UniProtKB"/>
</dbReference>
<dbReference type="InterPro" id="IPR003689">
    <property type="entry name" value="ZIP"/>
</dbReference>
<dbReference type="InterPro" id="IPR050799">
    <property type="entry name" value="ZIP_Transporter"/>
</dbReference>
<dbReference type="PANTHER" id="PTHR12191:SF5">
    <property type="entry name" value="METAL CATION SYMPORTER ZIP14"/>
    <property type="match status" value="1"/>
</dbReference>
<dbReference type="PANTHER" id="PTHR12191">
    <property type="entry name" value="SOLUTE CARRIER FAMILY 39"/>
    <property type="match status" value="1"/>
</dbReference>
<dbReference type="Pfam" id="PF02535">
    <property type="entry name" value="Zip"/>
    <property type="match status" value="1"/>
</dbReference>
<proteinExistence type="evidence at transcript level"/>
<evidence type="ECO:0000250" key="1">
    <source>
        <dbReference type="UniProtKB" id="Q15043"/>
    </source>
</evidence>
<evidence type="ECO:0000250" key="2">
    <source>
        <dbReference type="UniProtKB" id="Q75N73"/>
    </source>
</evidence>
<evidence type="ECO:0000255" key="3"/>
<evidence type="ECO:0000256" key="4">
    <source>
        <dbReference type="SAM" id="MobiDB-lite"/>
    </source>
</evidence>
<evidence type="ECO:0000305" key="5"/>
<organism>
    <name type="scientific">Xenopus tropicalis</name>
    <name type="common">Western clawed frog</name>
    <name type="synonym">Silurana tropicalis</name>
    <dbReference type="NCBI Taxonomy" id="8364"/>
    <lineage>
        <taxon>Eukaryota</taxon>
        <taxon>Metazoa</taxon>
        <taxon>Chordata</taxon>
        <taxon>Craniata</taxon>
        <taxon>Vertebrata</taxon>
        <taxon>Euteleostomi</taxon>
        <taxon>Amphibia</taxon>
        <taxon>Batrachia</taxon>
        <taxon>Anura</taxon>
        <taxon>Pipoidea</taxon>
        <taxon>Pipidae</taxon>
        <taxon>Xenopodinae</taxon>
        <taxon>Xenopus</taxon>
        <taxon>Silurana</taxon>
    </lineage>
</organism>
<gene>
    <name evidence="1" type="primary">slc39a14</name>
</gene>
<comment type="function">
    <text evidence="1 2">Electroneutral transporter of the plasma membrane mediating the cellular uptake of the divalent metal cations zinc, manganese and iron that are important for tissue homeostasis, metabolism, development and immunity (By similarity). Functions as an energy-dependent symporter, transporting through the membranes an electroneutral complex composed of a divalent metal cation and two bicarbonate anions. Beside these endogenous cellular substrates, can also import cadmium a non-essential metal which is cytotoxic and carcinogenic (By similarity).</text>
</comment>
<comment type="catalytic activity">
    <reaction evidence="2">
        <text>Zn(2+)(out) + 2 hydrogencarbonate(out) = Zn(2+)(in) + 2 hydrogencarbonate(in)</text>
        <dbReference type="Rhea" id="RHEA:62252"/>
        <dbReference type="ChEBI" id="CHEBI:17544"/>
        <dbReference type="ChEBI" id="CHEBI:29105"/>
    </reaction>
    <physiologicalReaction direction="left-to-right" evidence="2">
        <dbReference type="Rhea" id="RHEA:62253"/>
    </physiologicalReaction>
</comment>
<comment type="catalytic activity">
    <reaction evidence="2">
        <text>Mn(2+)(out) + 2 hydrogencarbonate(out) = Mn(2+)(in) + 2 hydrogencarbonate(in)</text>
        <dbReference type="Rhea" id="RHEA:62260"/>
        <dbReference type="ChEBI" id="CHEBI:17544"/>
        <dbReference type="ChEBI" id="CHEBI:29035"/>
    </reaction>
    <physiologicalReaction direction="left-to-right" evidence="2">
        <dbReference type="Rhea" id="RHEA:62261"/>
    </physiologicalReaction>
</comment>
<comment type="catalytic activity">
    <reaction evidence="2">
        <text>Fe(2+)(out) + 2 hydrogencarbonate(out) = Fe(2+)(in) + 2 hydrogencarbonate(in)</text>
        <dbReference type="Rhea" id="RHEA:62368"/>
        <dbReference type="ChEBI" id="CHEBI:17544"/>
        <dbReference type="ChEBI" id="CHEBI:29033"/>
    </reaction>
    <physiologicalReaction direction="left-to-right" evidence="2">
        <dbReference type="Rhea" id="RHEA:62369"/>
    </physiologicalReaction>
</comment>
<comment type="catalytic activity">
    <reaction evidence="2">
        <text>Cd(2+)(out) + 2 hydrogencarbonate(out) = Cd(2+)(in) + 2 hydrogencarbonate(in)</text>
        <dbReference type="Rhea" id="RHEA:62256"/>
        <dbReference type="ChEBI" id="CHEBI:17544"/>
        <dbReference type="ChEBI" id="CHEBI:48775"/>
    </reaction>
    <physiologicalReaction direction="left-to-right" evidence="2">
        <dbReference type="Rhea" id="RHEA:62257"/>
    </physiologicalReaction>
</comment>
<comment type="subunit">
    <text evidence="1">Homotrimer.</text>
</comment>
<comment type="subcellular location">
    <subcellularLocation>
        <location evidence="1">Cell membrane</location>
        <topology evidence="3">Multi-pass membrane protein</topology>
    </subcellularLocation>
    <subcellularLocation>
        <location evidence="1">Apical cell membrane</location>
        <topology evidence="3">Multi-pass membrane protein</topology>
    </subcellularLocation>
    <subcellularLocation>
        <location evidence="1">Basolateral cell membrane</location>
        <topology evidence="3">Multi-pass membrane protein</topology>
    </subcellularLocation>
    <subcellularLocation>
        <location evidence="1">Early endosome membrane</location>
        <topology evidence="3">Multi-pass membrane protein</topology>
    </subcellularLocation>
    <subcellularLocation>
        <location evidence="1">Late endosome membrane</location>
        <topology evidence="3">Multi-pass membrane protein</topology>
    </subcellularLocation>
    <subcellularLocation>
        <location evidence="1">Lysosome membrane</location>
        <topology evidence="3">Multi-pass membrane protein</topology>
    </subcellularLocation>
</comment>
<comment type="similarity">
    <text evidence="5">Belongs to the ZIP transporter (TC 2.A.5) family.</text>
</comment>
<sequence length="462" mass="50190">MPLLLLSALLPFSLMAGPTPSTGKELSAASFLQDILQRYGENESLSMPQLQSLLENLEVGKGGGNQRNMSQCLSSSTLFAAHNLTSGSVVDAEGFQSFCPTILQQLETRACQESPAFQNETTPGAEGRPSPGEVWGYGFLCVTVISLCSLFGAGVVPFMKKACYKRLLLFCIALAIGTLFSNALFQLIPEAFGFNPLEDSYVFTSSVIFGGFYLFFFTEKVLKMMLKQKHEHGHSHYSADTSKRDAEEGVTEKLQNGDLDHMIPPPHGSESDLRGDEKAVQQQDLPGQQSSCYWLKGIRYSDIGTLAWMITLSDGLHNFIDGLAIGASFTVSVFQGVSTSIAILCEEFPHELGDFVILLNAGMSIPQALFFNFLSACCCYLGLAFGILAGSHFSSNWIFALAGGMFLYIALSDMFPEMNEVSKEDEEGGRAFSAFMIQNAGLLTGFAIMLLLTTFSGQIQLG</sequence>
<accession>A4IGY6</accession>
<protein>
    <recommendedName>
        <fullName evidence="1">Metal cation symporter ZIP14</fullName>
    </recommendedName>
    <alternativeName>
        <fullName evidence="1">Solute carrier family 39 member 14</fullName>
    </alternativeName>
    <alternativeName>
        <fullName evidence="1">Zrt- and Irt-like protein 14</fullName>
        <shortName evidence="1">ZIP-14</shortName>
    </alternativeName>
</protein>
<feature type="signal peptide" evidence="3">
    <location>
        <begin position="1"/>
        <end position="16"/>
    </location>
</feature>
<feature type="chain" id="PRO_0000312197" description="Metal cation symporter ZIP14">
    <location>
        <begin position="17"/>
        <end position="462"/>
    </location>
</feature>
<feature type="topological domain" description="Extracellular" evidence="3">
    <location>
        <begin position="17"/>
        <end position="138"/>
    </location>
</feature>
<feature type="transmembrane region" description="Helical" evidence="3">
    <location>
        <begin position="139"/>
        <end position="159"/>
    </location>
</feature>
<feature type="topological domain" description="Cytoplasmic" evidence="3">
    <location>
        <begin position="160"/>
        <end position="167"/>
    </location>
</feature>
<feature type="transmembrane region" description="Helical" evidence="3">
    <location>
        <begin position="168"/>
        <end position="188"/>
    </location>
</feature>
<feature type="topological domain" description="Extracellular" evidence="3">
    <location>
        <begin position="189"/>
        <end position="201"/>
    </location>
</feature>
<feature type="transmembrane region" description="Helical" evidence="3">
    <location>
        <begin position="202"/>
        <end position="222"/>
    </location>
</feature>
<feature type="topological domain" description="Cytoplasmic" evidence="3">
    <location>
        <begin position="223"/>
        <end position="322"/>
    </location>
</feature>
<feature type="transmembrane region" description="Helical" evidence="3">
    <location>
        <begin position="323"/>
        <end position="343"/>
    </location>
</feature>
<feature type="topological domain" description="Extracellular" evidence="3">
    <location>
        <begin position="344"/>
        <end position="367"/>
    </location>
</feature>
<feature type="transmembrane region" description="Helical" evidence="3">
    <location>
        <begin position="368"/>
        <end position="388"/>
    </location>
</feature>
<feature type="topological domain" description="Cytoplasmic" evidence="3">
    <location>
        <begin position="389"/>
        <end position="396"/>
    </location>
</feature>
<feature type="transmembrane region" description="Helical" evidence="3">
    <location>
        <begin position="397"/>
        <end position="417"/>
    </location>
</feature>
<feature type="topological domain" description="Extracellular" evidence="3">
    <location>
        <begin position="418"/>
        <end position="431"/>
    </location>
</feature>
<feature type="transmembrane region" description="Helical" evidence="3">
    <location>
        <begin position="432"/>
        <end position="452"/>
    </location>
</feature>
<feature type="topological domain" description="Cytoplasmic" evidence="3">
    <location>
        <begin position="453"/>
        <end position="462"/>
    </location>
</feature>
<feature type="region of interest" description="Disordered" evidence="4">
    <location>
        <begin position="235"/>
        <end position="285"/>
    </location>
</feature>
<feature type="short sequence motif" description="HHHGHXHX-motif" evidence="1">
    <location>
        <begin position="230"/>
        <end position="237"/>
    </location>
</feature>
<feature type="short sequence motif" description="XEXPHE-motif" evidence="1">
    <location>
        <begin position="346"/>
        <end position="351"/>
    </location>
</feature>
<feature type="compositionally biased region" description="Basic and acidic residues" evidence="4">
    <location>
        <begin position="241"/>
        <end position="251"/>
    </location>
</feature>
<feature type="compositionally biased region" description="Basic and acidic residues" evidence="4">
    <location>
        <begin position="269"/>
        <end position="279"/>
    </location>
</feature>
<feature type="glycosylation site" description="N-linked (GlcNAc...) asparagine" evidence="3">
    <location>
        <position position="42"/>
    </location>
</feature>
<feature type="glycosylation site" description="N-linked (GlcNAc...) asparagine" evidence="3">
    <location>
        <position position="68"/>
    </location>
</feature>
<feature type="glycosylation site" description="N-linked (GlcNAc...) asparagine" evidence="3">
    <location>
        <position position="83"/>
    </location>
</feature>
<feature type="glycosylation site" description="N-linked (GlcNAc...) asparagine" evidence="3">
    <location>
        <position position="119"/>
    </location>
</feature>